<feature type="chain" id="PRO_1000115866" description="Enolase">
    <location>
        <begin position="1"/>
        <end position="427"/>
    </location>
</feature>
<feature type="active site" description="Proton donor" evidence="1">
    <location>
        <position position="204"/>
    </location>
</feature>
<feature type="active site" description="Proton acceptor" evidence="1">
    <location>
        <position position="334"/>
    </location>
</feature>
<feature type="binding site" evidence="1">
    <location>
        <position position="162"/>
    </location>
    <ligand>
        <name>(2R)-2-phosphoglycerate</name>
        <dbReference type="ChEBI" id="CHEBI:58289"/>
    </ligand>
</feature>
<feature type="binding site" evidence="1">
    <location>
        <position position="241"/>
    </location>
    <ligand>
        <name>Mg(2+)</name>
        <dbReference type="ChEBI" id="CHEBI:18420"/>
    </ligand>
</feature>
<feature type="binding site" evidence="1">
    <location>
        <position position="282"/>
    </location>
    <ligand>
        <name>Mg(2+)</name>
        <dbReference type="ChEBI" id="CHEBI:18420"/>
    </ligand>
</feature>
<feature type="binding site" evidence="1">
    <location>
        <position position="309"/>
    </location>
    <ligand>
        <name>Mg(2+)</name>
        <dbReference type="ChEBI" id="CHEBI:18420"/>
    </ligand>
</feature>
<feature type="binding site" evidence="1">
    <location>
        <position position="334"/>
    </location>
    <ligand>
        <name>(2R)-2-phosphoglycerate</name>
        <dbReference type="ChEBI" id="CHEBI:58289"/>
    </ligand>
</feature>
<feature type="binding site" evidence="1">
    <location>
        <position position="363"/>
    </location>
    <ligand>
        <name>(2R)-2-phosphoglycerate</name>
        <dbReference type="ChEBI" id="CHEBI:58289"/>
    </ligand>
</feature>
<feature type="binding site" evidence="1">
    <location>
        <position position="364"/>
    </location>
    <ligand>
        <name>(2R)-2-phosphoglycerate</name>
        <dbReference type="ChEBI" id="CHEBI:58289"/>
    </ligand>
</feature>
<feature type="binding site" evidence="1">
    <location>
        <position position="385"/>
    </location>
    <ligand>
        <name>(2R)-2-phosphoglycerate</name>
        <dbReference type="ChEBI" id="CHEBI:58289"/>
    </ligand>
</feature>
<comment type="function">
    <text evidence="1">Catalyzes the reversible conversion of 2-phosphoglycerate (2-PG) into phosphoenolpyruvate (PEP). It is essential for the degradation of carbohydrates via glycolysis.</text>
</comment>
<comment type="catalytic activity">
    <reaction evidence="1">
        <text>(2R)-2-phosphoglycerate = phosphoenolpyruvate + H2O</text>
        <dbReference type="Rhea" id="RHEA:10164"/>
        <dbReference type="ChEBI" id="CHEBI:15377"/>
        <dbReference type="ChEBI" id="CHEBI:58289"/>
        <dbReference type="ChEBI" id="CHEBI:58702"/>
        <dbReference type="EC" id="4.2.1.11"/>
    </reaction>
</comment>
<comment type="cofactor">
    <cofactor evidence="1">
        <name>Mg(2+)</name>
        <dbReference type="ChEBI" id="CHEBI:18420"/>
    </cofactor>
    <text evidence="1">Binds a second Mg(2+) ion via substrate during catalysis.</text>
</comment>
<comment type="pathway">
    <text evidence="1">Carbohydrate degradation; glycolysis; pyruvate from D-glyceraldehyde 3-phosphate: step 4/5.</text>
</comment>
<comment type="subcellular location">
    <subcellularLocation>
        <location evidence="1">Cytoplasm</location>
    </subcellularLocation>
    <subcellularLocation>
        <location evidence="1">Secreted</location>
    </subcellularLocation>
    <subcellularLocation>
        <location evidence="1">Cell surface</location>
    </subcellularLocation>
    <text evidence="1">Fractions of enolase are present in both the cytoplasm and on the cell surface.</text>
</comment>
<comment type="similarity">
    <text evidence="1">Belongs to the enolase family.</text>
</comment>
<keyword id="KW-0963">Cytoplasm</keyword>
<keyword id="KW-0324">Glycolysis</keyword>
<keyword id="KW-0456">Lyase</keyword>
<keyword id="KW-0460">Magnesium</keyword>
<keyword id="KW-0479">Metal-binding</keyword>
<keyword id="KW-0964">Secreted</keyword>
<evidence type="ECO:0000255" key="1">
    <source>
        <dbReference type="HAMAP-Rule" id="MF_00318"/>
    </source>
</evidence>
<dbReference type="EC" id="4.2.1.11" evidence="1"/>
<dbReference type="EMBL" id="CP000820">
    <property type="protein sequence ID" value="ABW10265.1"/>
    <property type="molecule type" value="Genomic_DNA"/>
</dbReference>
<dbReference type="RefSeq" id="WP_020458457.1">
    <property type="nucleotide sequence ID" value="NC_009921.1"/>
</dbReference>
<dbReference type="SMR" id="A8L149"/>
<dbReference type="STRING" id="298653.Franean1_0807"/>
<dbReference type="KEGG" id="fre:Franean1_0807"/>
<dbReference type="eggNOG" id="COG0148">
    <property type="taxonomic scope" value="Bacteria"/>
</dbReference>
<dbReference type="HOGENOM" id="CLU_031223_2_1_11"/>
<dbReference type="UniPathway" id="UPA00109">
    <property type="reaction ID" value="UER00187"/>
</dbReference>
<dbReference type="GO" id="GO:0009986">
    <property type="term" value="C:cell surface"/>
    <property type="evidence" value="ECO:0007669"/>
    <property type="project" value="UniProtKB-SubCell"/>
</dbReference>
<dbReference type="GO" id="GO:0005576">
    <property type="term" value="C:extracellular region"/>
    <property type="evidence" value="ECO:0007669"/>
    <property type="project" value="UniProtKB-SubCell"/>
</dbReference>
<dbReference type="GO" id="GO:0000015">
    <property type="term" value="C:phosphopyruvate hydratase complex"/>
    <property type="evidence" value="ECO:0007669"/>
    <property type="project" value="InterPro"/>
</dbReference>
<dbReference type="GO" id="GO:0000287">
    <property type="term" value="F:magnesium ion binding"/>
    <property type="evidence" value="ECO:0007669"/>
    <property type="project" value="UniProtKB-UniRule"/>
</dbReference>
<dbReference type="GO" id="GO:0004634">
    <property type="term" value="F:phosphopyruvate hydratase activity"/>
    <property type="evidence" value="ECO:0007669"/>
    <property type="project" value="UniProtKB-UniRule"/>
</dbReference>
<dbReference type="GO" id="GO:0006096">
    <property type="term" value="P:glycolytic process"/>
    <property type="evidence" value="ECO:0007669"/>
    <property type="project" value="UniProtKB-UniRule"/>
</dbReference>
<dbReference type="CDD" id="cd03313">
    <property type="entry name" value="enolase"/>
    <property type="match status" value="1"/>
</dbReference>
<dbReference type="FunFam" id="3.20.20.120:FF:000001">
    <property type="entry name" value="Enolase"/>
    <property type="match status" value="1"/>
</dbReference>
<dbReference type="FunFam" id="3.30.390.10:FF:000001">
    <property type="entry name" value="Enolase"/>
    <property type="match status" value="1"/>
</dbReference>
<dbReference type="Gene3D" id="3.20.20.120">
    <property type="entry name" value="Enolase-like C-terminal domain"/>
    <property type="match status" value="1"/>
</dbReference>
<dbReference type="Gene3D" id="3.30.390.10">
    <property type="entry name" value="Enolase-like, N-terminal domain"/>
    <property type="match status" value="1"/>
</dbReference>
<dbReference type="HAMAP" id="MF_00318">
    <property type="entry name" value="Enolase"/>
    <property type="match status" value="1"/>
</dbReference>
<dbReference type="InterPro" id="IPR000941">
    <property type="entry name" value="Enolase"/>
</dbReference>
<dbReference type="InterPro" id="IPR036849">
    <property type="entry name" value="Enolase-like_C_sf"/>
</dbReference>
<dbReference type="InterPro" id="IPR029017">
    <property type="entry name" value="Enolase-like_N"/>
</dbReference>
<dbReference type="InterPro" id="IPR020810">
    <property type="entry name" value="Enolase_C"/>
</dbReference>
<dbReference type="InterPro" id="IPR020809">
    <property type="entry name" value="Enolase_CS"/>
</dbReference>
<dbReference type="InterPro" id="IPR020811">
    <property type="entry name" value="Enolase_N"/>
</dbReference>
<dbReference type="NCBIfam" id="TIGR01060">
    <property type="entry name" value="eno"/>
    <property type="match status" value="1"/>
</dbReference>
<dbReference type="PANTHER" id="PTHR11902">
    <property type="entry name" value="ENOLASE"/>
    <property type="match status" value="1"/>
</dbReference>
<dbReference type="PANTHER" id="PTHR11902:SF1">
    <property type="entry name" value="ENOLASE"/>
    <property type="match status" value="1"/>
</dbReference>
<dbReference type="Pfam" id="PF00113">
    <property type="entry name" value="Enolase_C"/>
    <property type="match status" value="1"/>
</dbReference>
<dbReference type="Pfam" id="PF03952">
    <property type="entry name" value="Enolase_N"/>
    <property type="match status" value="1"/>
</dbReference>
<dbReference type="PIRSF" id="PIRSF001400">
    <property type="entry name" value="Enolase"/>
    <property type="match status" value="1"/>
</dbReference>
<dbReference type="PRINTS" id="PR00148">
    <property type="entry name" value="ENOLASE"/>
</dbReference>
<dbReference type="SFLD" id="SFLDF00002">
    <property type="entry name" value="enolase"/>
    <property type="match status" value="1"/>
</dbReference>
<dbReference type="SFLD" id="SFLDG00178">
    <property type="entry name" value="enolase"/>
    <property type="match status" value="1"/>
</dbReference>
<dbReference type="SMART" id="SM01192">
    <property type="entry name" value="Enolase_C"/>
    <property type="match status" value="1"/>
</dbReference>
<dbReference type="SMART" id="SM01193">
    <property type="entry name" value="Enolase_N"/>
    <property type="match status" value="1"/>
</dbReference>
<dbReference type="SUPFAM" id="SSF51604">
    <property type="entry name" value="Enolase C-terminal domain-like"/>
    <property type="match status" value="1"/>
</dbReference>
<dbReference type="SUPFAM" id="SSF54826">
    <property type="entry name" value="Enolase N-terminal domain-like"/>
    <property type="match status" value="1"/>
</dbReference>
<dbReference type="PROSITE" id="PS00164">
    <property type="entry name" value="ENOLASE"/>
    <property type="match status" value="1"/>
</dbReference>
<protein>
    <recommendedName>
        <fullName evidence="1">Enolase</fullName>
        <ecNumber evidence="1">4.2.1.11</ecNumber>
    </recommendedName>
    <alternativeName>
        <fullName evidence="1">2-phospho-D-glycerate hydro-lyase</fullName>
    </alternativeName>
    <alternativeName>
        <fullName evidence="1">2-phosphoglycerate dehydratase</fullName>
    </alternativeName>
</protein>
<name>ENO_PARS2</name>
<accession>A8L149</accession>
<sequence>MPSIEAVGAREILDSRGNPTVEVEVVLEDGTLGRAAVPSGASTGAFEAVELRDGGDRYGGKGVTKAVEAVIGRIGPAIMELEATEQRLLDATLIDLDGTPGKSALGANALLGVSLAVAKAAAASSGLPLFRYLGGPSAHLLPVPMMNILNGGAHADTNVDIQEFMIAPIGAGTFAESLRWGAEIYQALKSVLKGRGLATGVGDEGGFAPSLPTNREALDLIAEAIDKAGFGLGDDIALALDVASTEFFADGSYTFEGSGRSAEQMIDYYADLVDSYPIVSIEDPLAEDDWAGWTSITTRLGARVQLVGDDLFVTNPERLARGIAEGAANALLVKVNQIGTLTETLDAVNLAHRSGYRCMMSHRSGETEDTTIADLAVAVDCGQIKTGAPARSERVAKYNQLLRIEEELDDAARYAGAGAFPRRTTTG</sequence>
<reference key="1">
    <citation type="journal article" date="2007" name="Genome Res.">
        <title>Genome characteristics of facultatively symbiotic Frankia sp. strains reflect host range and host plant biogeography.</title>
        <authorList>
            <person name="Normand P."/>
            <person name="Lapierre P."/>
            <person name="Tisa L.S."/>
            <person name="Gogarten J.P."/>
            <person name="Alloisio N."/>
            <person name="Bagnarol E."/>
            <person name="Bassi C.A."/>
            <person name="Berry A.M."/>
            <person name="Bickhart D.M."/>
            <person name="Choisne N."/>
            <person name="Couloux A."/>
            <person name="Cournoyer B."/>
            <person name="Cruveiller S."/>
            <person name="Daubin V."/>
            <person name="Demange N."/>
            <person name="Francino M.P."/>
            <person name="Goltsman E."/>
            <person name="Huang Y."/>
            <person name="Kopp O.R."/>
            <person name="Labarre L."/>
            <person name="Lapidus A."/>
            <person name="Lavire C."/>
            <person name="Marechal J."/>
            <person name="Martinez M."/>
            <person name="Mastronunzio J.E."/>
            <person name="Mullin B.C."/>
            <person name="Niemann J."/>
            <person name="Pujic P."/>
            <person name="Rawnsley T."/>
            <person name="Rouy Z."/>
            <person name="Schenowitz C."/>
            <person name="Sellstedt A."/>
            <person name="Tavares F."/>
            <person name="Tomkins J.P."/>
            <person name="Vallenet D."/>
            <person name="Valverde C."/>
            <person name="Wall L.G."/>
            <person name="Wang Y."/>
            <person name="Medigue C."/>
            <person name="Benson D.R."/>
        </authorList>
    </citation>
    <scope>NUCLEOTIDE SEQUENCE [LARGE SCALE GENOMIC DNA]</scope>
    <source>
        <strain>EAN1pec</strain>
    </source>
</reference>
<gene>
    <name evidence="1" type="primary">eno</name>
    <name type="ordered locus">Franean1_0807</name>
</gene>
<proteinExistence type="inferred from homology"/>
<organism>
    <name type="scientific">Parafrankia sp. (strain EAN1pec)</name>
    <dbReference type="NCBI Taxonomy" id="298653"/>
    <lineage>
        <taxon>Bacteria</taxon>
        <taxon>Bacillati</taxon>
        <taxon>Actinomycetota</taxon>
        <taxon>Actinomycetes</taxon>
        <taxon>Frankiales</taxon>
        <taxon>Frankiaceae</taxon>
        <taxon>Parafrankia</taxon>
    </lineage>
</organism>